<organism>
    <name type="scientific">Scheffersomyces stipitis (strain ATCC 58785 / CBS 6054 / NBRC 10063 / NRRL Y-11545)</name>
    <name type="common">Yeast</name>
    <name type="synonym">Pichia stipitis</name>
    <dbReference type="NCBI Taxonomy" id="322104"/>
    <lineage>
        <taxon>Eukaryota</taxon>
        <taxon>Fungi</taxon>
        <taxon>Dikarya</taxon>
        <taxon>Ascomycota</taxon>
        <taxon>Saccharomycotina</taxon>
        <taxon>Pichiomycetes</taxon>
        <taxon>Debaryomycetaceae</taxon>
        <taxon>Scheffersomyces</taxon>
    </lineage>
</organism>
<protein>
    <recommendedName>
        <fullName>Altered inheritance of mitochondria protein 24, mitochondrial</fullName>
    </recommendedName>
</protein>
<accession>A3LZY1</accession>
<gene>
    <name type="primary">AIM24</name>
    <name type="ORF">PICST_85561</name>
</gene>
<feature type="transit peptide" description="Mitochondrion" evidence="2">
    <location>
        <begin position="1"/>
        <end position="23"/>
    </location>
</feature>
<feature type="chain" id="PRO_0000399588" description="Altered inheritance of mitochondria protein 24, mitochondrial">
    <location>
        <begin position="24"/>
        <end position="422"/>
    </location>
</feature>
<keyword id="KW-0496">Mitochondrion</keyword>
<keyword id="KW-1185">Reference proteome</keyword>
<keyword id="KW-0809">Transit peptide</keyword>
<name>AIM24_PICST</name>
<dbReference type="EMBL" id="CP000502">
    <property type="protein sequence ID" value="ABN68423.1"/>
    <property type="molecule type" value="Genomic_DNA"/>
</dbReference>
<dbReference type="RefSeq" id="XP_001386452.1">
    <property type="nucleotide sequence ID" value="XM_001386415.1"/>
</dbReference>
<dbReference type="FunCoup" id="A3LZY1">
    <property type="interactions" value="13"/>
</dbReference>
<dbReference type="GeneID" id="4840886"/>
<dbReference type="KEGG" id="pic:PICST_85561"/>
<dbReference type="eggNOG" id="ENOG502RXC5">
    <property type="taxonomic scope" value="Eukaryota"/>
</dbReference>
<dbReference type="HOGENOM" id="CLU_040665_0_0_1"/>
<dbReference type="InParanoid" id="A3LZY1"/>
<dbReference type="OMA" id="NGPYDLQ"/>
<dbReference type="OrthoDB" id="5295771at2759"/>
<dbReference type="Proteomes" id="UP000002258">
    <property type="component" value="Chromosome 8"/>
</dbReference>
<dbReference type="GO" id="GO:0005743">
    <property type="term" value="C:mitochondrial inner membrane"/>
    <property type="evidence" value="ECO:0007669"/>
    <property type="project" value="TreeGrafter"/>
</dbReference>
<dbReference type="GO" id="GO:0007007">
    <property type="term" value="P:inner mitochondrial membrane organization"/>
    <property type="evidence" value="ECO:0007669"/>
    <property type="project" value="TreeGrafter"/>
</dbReference>
<dbReference type="Gene3D" id="3.60.160.10">
    <property type="entry name" value="Mitochondrial biogenesis AIM24"/>
    <property type="match status" value="1"/>
</dbReference>
<dbReference type="InterPro" id="IPR002838">
    <property type="entry name" value="AIM24"/>
</dbReference>
<dbReference type="InterPro" id="IPR036983">
    <property type="entry name" value="AIM24_sf"/>
</dbReference>
<dbReference type="PANTHER" id="PTHR36959">
    <property type="entry name" value="ALTERED INHERITANCE OF MITOCHONDRIA PROTEIN 24, MITOCHONDRIAL"/>
    <property type="match status" value="1"/>
</dbReference>
<dbReference type="PANTHER" id="PTHR36959:SF2">
    <property type="entry name" value="ALTERED INHERITANCE OF MITOCHONDRIA PROTEIN 24, MITOCHONDRIAL"/>
    <property type="match status" value="1"/>
</dbReference>
<dbReference type="Pfam" id="PF01987">
    <property type="entry name" value="AIM24"/>
    <property type="match status" value="1"/>
</dbReference>
<reference key="1">
    <citation type="journal article" date="2007" name="Nat. Biotechnol.">
        <title>Genome sequence of the lignocellulose-bioconverting and xylose-fermenting yeast Pichia stipitis.</title>
        <authorList>
            <person name="Jeffries T.W."/>
            <person name="Grigoriev I.V."/>
            <person name="Grimwood J."/>
            <person name="Laplaza J.M."/>
            <person name="Aerts A."/>
            <person name="Salamov A."/>
            <person name="Schmutz J."/>
            <person name="Lindquist E."/>
            <person name="Dehal P."/>
            <person name="Shapiro H."/>
            <person name="Jin Y.-S."/>
            <person name="Passoth V."/>
            <person name="Richardson P.M."/>
        </authorList>
    </citation>
    <scope>NUCLEOTIDE SEQUENCE [LARGE SCALE GENOMIC DNA]</scope>
    <source>
        <strain>ATCC 58785 / CBS 6054 / NBRC 10063 / NRRL Y-11545</strain>
    </source>
</reference>
<comment type="subcellular location">
    <subcellularLocation>
        <location evidence="1">Mitochondrion</location>
    </subcellularLocation>
</comment>
<comment type="similarity">
    <text evidence="3">Belongs to the AIM24 family.</text>
</comment>
<evidence type="ECO:0000250" key="1"/>
<evidence type="ECO:0000255" key="2"/>
<evidence type="ECO:0000305" key="3"/>
<sequence>MSKSYVSRIVKVGNIKELNFRRSVSISQAPTGIQGDISTTTTYEENIKNAENLKAGNVLETAEFKALGTPQSVLSINCPPSVPVYLRRGSLLSIYGLNDSSSIKNVRSSINFINPIRRLLFGINTSSYQRLESTTPFSLLISATYRKFSIFKKSDNKSFVTISLDGSTDWSILYRDALQVYTGNSLTVSQYRVPRTISRKLSRTLNIPSNTTTGLFKWNKSGFIFLSGRGQVGLVGNGAIYNINLDDKEELLINRDNLLGLTVNGPFDLQNCVVEHNFTTHEKRSESSSVVQKPLGISVILKQQTTVRHKFKQIWSLFQYHLEASFSFLRGSRNKTNNFLVGNQNFVKIIGPRNLLLQSSSETSHIETPTPKRKNGVEVANVTGPKQTSADYLSYVTVTPGQGVKFESTPDFKDTVDKIERK</sequence>
<proteinExistence type="inferred from homology"/>